<keyword id="KW-1003">Cell membrane</keyword>
<keyword id="KW-0472">Membrane</keyword>
<keyword id="KW-1185">Reference proteome</keyword>
<keyword id="KW-0812">Transmembrane</keyword>
<keyword id="KW-1133">Transmembrane helix</keyword>
<keyword id="KW-0813">Transport</keyword>
<feature type="chain" id="PRO_0000094734" description="Homoserine/homoserine lactone efflux protein">
    <location>
        <begin position="1"/>
        <end position="206"/>
    </location>
</feature>
<feature type="transmembrane region" description="Helical" evidence="2">
    <location>
        <begin position="5"/>
        <end position="25"/>
    </location>
</feature>
<feature type="transmembrane region" description="Helical" evidence="2">
    <location>
        <begin position="45"/>
        <end position="65"/>
    </location>
</feature>
<feature type="transmembrane region" description="Helical" evidence="2">
    <location>
        <begin position="68"/>
        <end position="88"/>
    </location>
</feature>
<feature type="transmembrane region" description="Helical" evidence="2">
    <location>
        <begin position="117"/>
        <end position="137"/>
    </location>
</feature>
<feature type="transmembrane region" description="Helical" evidence="2">
    <location>
        <begin position="148"/>
        <end position="168"/>
    </location>
</feature>
<feature type="transmembrane region" description="Helical" evidence="2">
    <location>
        <begin position="182"/>
        <end position="202"/>
    </location>
</feature>
<evidence type="ECO:0000250" key="1"/>
<evidence type="ECO:0000255" key="2"/>
<evidence type="ECO:0000305" key="3"/>
<gene>
    <name type="primary">rhtB</name>
    <name type="ordered locus">STM3960</name>
    <name type="ORF">STMD1.30</name>
</gene>
<comment type="function">
    <text evidence="1">Conducts the efflux of homoserine and homoserine lactone.</text>
</comment>
<comment type="subcellular location">
    <subcellularLocation>
        <location evidence="3">Cell membrane</location>
        <topology evidence="3">Multi-pass membrane protein</topology>
    </subcellularLocation>
</comment>
<comment type="similarity">
    <text evidence="3">Belongs to the Rht family.</text>
</comment>
<name>RHTB_SALTY</name>
<sequence length="206" mass="22322">MTFEWWFAYLLTSTLLSLSPGSGAINTMTTSINHGYRGAVASIAGLQTGLGIHIVLVGVGLGTLFSRSLLAFEILKWAGAAYLIWLGIQQWRAAGAIDLHTLAQTQSRGRLFKRAIFVNLTNPKSIVFLAALFPQFIMPQQPQLAQYLILGVTTIVVDMVVMTGYATLAQRIAAWIKGPKQMKALNKAFGSLFMLVGALLASARHA</sequence>
<accession>Q9L6N6</accession>
<dbReference type="EMBL" id="AF233324">
    <property type="protein sequence ID" value="AAF33432.1"/>
    <property type="molecule type" value="Genomic_DNA"/>
</dbReference>
<dbReference type="EMBL" id="AE006468">
    <property type="protein sequence ID" value="AAL22804.1"/>
    <property type="molecule type" value="Genomic_DNA"/>
</dbReference>
<dbReference type="RefSeq" id="WP_000142528.1">
    <property type="nucleotide sequence ID" value="NC_003197.2"/>
</dbReference>
<dbReference type="STRING" id="99287.STM3960"/>
<dbReference type="PaxDb" id="99287-STM3960"/>
<dbReference type="KEGG" id="stm:STM3960"/>
<dbReference type="PATRIC" id="fig|99287.12.peg.4178"/>
<dbReference type="HOGENOM" id="CLU_079569_2_1_6"/>
<dbReference type="OMA" id="MQYVVLG"/>
<dbReference type="PhylomeDB" id="Q9L6N6"/>
<dbReference type="BioCyc" id="SENT99287:STM3960-MONOMER"/>
<dbReference type="Proteomes" id="UP000001014">
    <property type="component" value="Chromosome"/>
</dbReference>
<dbReference type="GO" id="GO:0005886">
    <property type="term" value="C:plasma membrane"/>
    <property type="evidence" value="ECO:0000318"/>
    <property type="project" value="GO_Central"/>
</dbReference>
<dbReference type="GO" id="GO:0042970">
    <property type="term" value="F:homoserine transmembrane transporter activity"/>
    <property type="evidence" value="ECO:0000318"/>
    <property type="project" value="GO_Central"/>
</dbReference>
<dbReference type="GO" id="GO:0042968">
    <property type="term" value="P:homoserine transport"/>
    <property type="evidence" value="ECO:0000318"/>
    <property type="project" value="GO_Central"/>
</dbReference>
<dbReference type="InterPro" id="IPR004778">
    <property type="entry name" value="Homoserine/Threonine_efflux"/>
</dbReference>
<dbReference type="InterPro" id="IPR001123">
    <property type="entry name" value="LeuE-type"/>
</dbReference>
<dbReference type="NCBIfam" id="TIGR00949">
    <property type="entry name" value="2A76"/>
    <property type="match status" value="1"/>
</dbReference>
<dbReference type="NCBIfam" id="NF007812">
    <property type="entry name" value="PRK10520.1"/>
    <property type="match status" value="1"/>
</dbReference>
<dbReference type="PANTHER" id="PTHR30086">
    <property type="entry name" value="ARGININE EXPORTER PROTEIN ARGO"/>
    <property type="match status" value="1"/>
</dbReference>
<dbReference type="PANTHER" id="PTHR30086:SF14">
    <property type="entry name" value="HOMOSERINE_HOMOSERINE LACTONE EFFLUX PROTEIN"/>
    <property type="match status" value="1"/>
</dbReference>
<dbReference type="Pfam" id="PF01810">
    <property type="entry name" value="LysE"/>
    <property type="match status" value="1"/>
</dbReference>
<dbReference type="PIRSF" id="PIRSF006324">
    <property type="entry name" value="LeuE"/>
    <property type="match status" value="1"/>
</dbReference>
<organism>
    <name type="scientific">Salmonella typhimurium (strain LT2 / SGSC1412 / ATCC 700720)</name>
    <dbReference type="NCBI Taxonomy" id="99287"/>
    <lineage>
        <taxon>Bacteria</taxon>
        <taxon>Pseudomonadati</taxon>
        <taxon>Pseudomonadota</taxon>
        <taxon>Gammaproteobacteria</taxon>
        <taxon>Enterobacterales</taxon>
        <taxon>Enterobacteriaceae</taxon>
        <taxon>Salmonella</taxon>
    </lineage>
</organism>
<proteinExistence type="inferred from homology"/>
<protein>
    <recommendedName>
        <fullName>Homoserine/homoserine lactone efflux protein</fullName>
    </recommendedName>
</protein>
<reference key="1">
    <citation type="journal article" date="2001" name="Nature">
        <title>Complete genome sequence of Salmonella enterica serovar Typhimurium LT2.</title>
        <authorList>
            <person name="McClelland M."/>
            <person name="Sanderson K.E."/>
            <person name="Spieth J."/>
            <person name="Clifton S.W."/>
            <person name="Latreille P."/>
            <person name="Courtney L."/>
            <person name="Porwollik S."/>
            <person name="Ali J."/>
            <person name="Dante M."/>
            <person name="Du F."/>
            <person name="Hou S."/>
            <person name="Layman D."/>
            <person name="Leonard S."/>
            <person name="Nguyen C."/>
            <person name="Scott K."/>
            <person name="Holmes A."/>
            <person name="Grewal N."/>
            <person name="Mulvaney E."/>
            <person name="Ryan E."/>
            <person name="Sun H."/>
            <person name="Florea L."/>
            <person name="Miller W."/>
            <person name="Stoneking T."/>
            <person name="Nhan M."/>
            <person name="Waterston R."/>
            <person name="Wilson R.K."/>
        </authorList>
    </citation>
    <scope>NUCLEOTIDE SEQUENCE [LARGE SCALE GENOMIC DNA]</scope>
    <source>
        <strain>LT2 / SGSC1412 / ATCC 700720</strain>
    </source>
</reference>